<dbReference type="RefSeq" id="XP_002153905.2">
    <property type="nucleotide sequence ID" value="XM_002153869.3"/>
</dbReference>
<dbReference type="SMR" id="A0A8B6XDS4"/>
<dbReference type="GeneID" id="100215031"/>
<dbReference type="KEGG" id="hmg:100215031"/>
<dbReference type="Proteomes" id="UP000694840">
    <property type="component" value="Unplaced"/>
</dbReference>
<dbReference type="GO" id="GO:0005576">
    <property type="term" value="C:extracellular region"/>
    <property type="evidence" value="ECO:0007669"/>
    <property type="project" value="UniProtKB-SubCell"/>
</dbReference>
<dbReference type="GO" id="GO:0042151">
    <property type="term" value="C:nematocyst"/>
    <property type="evidence" value="ECO:0007669"/>
    <property type="project" value="UniProtKB-SubCell"/>
</dbReference>
<dbReference type="GO" id="GO:0044218">
    <property type="term" value="C:other organism cell membrane"/>
    <property type="evidence" value="ECO:0007669"/>
    <property type="project" value="UniProtKB-KW"/>
</dbReference>
<dbReference type="GO" id="GO:0046930">
    <property type="term" value="C:pore complex"/>
    <property type="evidence" value="ECO:0007669"/>
    <property type="project" value="InterPro"/>
</dbReference>
<dbReference type="GO" id="GO:0015267">
    <property type="term" value="F:channel activity"/>
    <property type="evidence" value="ECO:0007669"/>
    <property type="project" value="InterPro"/>
</dbReference>
<dbReference type="GO" id="GO:0090729">
    <property type="term" value="F:toxin activity"/>
    <property type="evidence" value="ECO:0007669"/>
    <property type="project" value="UniProtKB-KW"/>
</dbReference>
<dbReference type="GO" id="GO:0051715">
    <property type="term" value="P:cytolysis in another organism"/>
    <property type="evidence" value="ECO:0007669"/>
    <property type="project" value="InterPro"/>
</dbReference>
<dbReference type="GO" id="GO:0006812">
    <property type="term" value="P:monoatomic cation transport"/>
    <property type="evidence" value="ECO:0007669"/>
    <property type="project" value="InterPro"/>
</dbReference>
<dbReference type="GO" id="GO:0046931">
    <property type="term" value="P:pore complex assembly"/>
    <property type="evidence" value="ECO:0007669"/>
    <property type="project" value="InterPro"/>
</dbReference>
<dbReference type="Gene3D" id="2.60.270.20">
    <property type="entry name" value="Cytolysin/lectin"/>
    <property type="match status" value="1"/>
</dbReference>
<dbReference type="InterPro" id="IPR050677">
    <property type="entry name" value="Actinoporin_PFT"/>
</dbReference>
<dbReference type="InterPro" id="IPR009104">
    <property type="entry name" value="Anemon_actinoporin-like"/>
</dbReference>
<dbReference type="InterPro" id="IPR015926">
    <property type="entry name" value="Cytolysin/lectin"/>
</dbReference>
<dbReference type="PANTHER" id="PTHR40388">
    <property type="entry name" value="BRYOPORIN"/>
    <property type="match status" value="1"/>
</dbReference>
<dbReference type="PANTHER" id="PTHR40388:SF1">
    <property type="entry name" value="BRYOPORIN"/>
    <property type="match status" value="1"/>
</dbReference>
<dbReference type="Pfam" id="PF06369">
    <property type="entry name" value="Anemone_cytotox"/>
    <property type="match status" value="1"/>
</dbReference>
<dbReference type="SUPFAM" id="SSF63724">
    <property type="entry name" value="Cytolysin/lectin"/>
    <property type="match status" value="1"/>
</dbReference>
<accession>A0A8B6XDS4</accession>
<feature type="signal peptide" evidence="5">
    <location>
        <begin position="1"/>
        <end position="21"/>
    </location>
</feature>
<feature type="chain" id="PRO_5034682602" description="Hydra actinoporin-like toxin 2">
    <location>
        <begin position="22"/>
        <end position="203"/>
    </location>
</feature>
<feature type="short sequence motif" description="Cell attachment site" evidence="3">
    <location>
        <begin position="175"/>
        <end position="177"/>
    </location>
</feature>
<sequence length="203" mass="21802">MLSYLCFGCFLVSASLEIACGTPIKETSKADAGGGAGIAILGVLAKVGVEAALQQIDNIWKGDVVRYWKCAVENRSDKTLYAYGTTSESGSMGTVFADIPSGSTGIFVWEKSRGAATGASGVVHYRYGDKILNLMASIPYDWNLYQSWANARVSNEKESFYNLYNGLNGAKPATRGGNWGDVDGAKFFLTEKSHAEFKVIFSG</sequence>
<comment type="function">
    <text evidence="1 2 6">Pore-forming protein that forms hydrophilic pores and causes cytolysis (PubMed:31513812). Compared to equinatoxin-2 (AC P61914), it reveals lower cytolysis activity (5-12-fold difference, tested on erythrocytes), a larger pore size (probably 2-3 nm) and different affinity to membrane lipids (100-fold lower affinity to sphingomyelin) (By similarity) (PubMed:31513812). Binds to sulfatides (SFT) (PubMed:31513812). Shows cytolytic activity on HeLa cells, with a different potency than its paralogs (from most potent to less potent: HALT-4&gt;HALT-6~HALT-1&gt;HALT-3&gt;HALT-7&gt;HALT-2) (PubMed:31513812). Pore formation is a multi-step process that involves specific recognition of membrane lipid by a protein aromatic residues rich region, firm binding to the membrane (mainly driven by hydrophobic interactions) accompanied by the transfer of the N-terminal region to the lipid-water interface and finally pore formation after oligomerization of monomers (By similarity). In vitro, binds to the folate receptor alpha (FOLR1), a GPI-anchored membrane protein that plays a major role in the uptake of folate/folic acid into cells via endocytosis, suggesting a possible involvement of this receptor in the mechanism of HALT-1-induced cell lysis (By similarity). In vivo, does not cause visible paralysis in larvae of the blowfly Sarcophaga faculata, the most common arthropod prey of Hydra (By similarity).</text>
</comment>
<comment type="subunit">
    <text evidence="1 2">Octamer or nonamer in membranes (By similarity). Monomer in the soluble state (By similarity). In vitro, interacts with folate receptor alpha (of target organism) (By similarity).</text>
</comment>
<comment type="subcellular location">
    <subcellularLocation>
        <location evidence="2">Nematocyst</location>
    </subcellularLocation>
    <subcellularLocation>
        <location evidence="2">Secreted</location>
    </subcellularLocation>
    <subcellularLocation>
        <location evidence="2">Target cell membrane</location>
    </subcellularLocation>
    <text evidence="2">Forms an alpha-helical membrane channel in the prey.</text>
</comment>
<comment type="tissue specificity">
    <text evidence="6">Strongly expressed in the gland and mucous cells in the endoderm.</text>
</comment>
<comment type="domain">
    <text evidence="4">Composed of a long N-terminal alpha-helix and a core region rich in beta-sheet structures. Before the pore formation, the alpha-helix binds the lipid membrane, partitions into the lipid-water interface and stabilizes the monomeric molecule on the membrane. Finally, it traverses the bilayer, thus forming the transmembrane pore.</text>
</comment>
<comment type="similarity">
    <text evidence="9">Belongs to the actinoporin family. HALT subfamily.</text>
</comment>
<evidence type="ECO:0000250" key="1">
    <source>
        <dbReference type="UniProtKB" id="A0A8B7DWS6"/>
    </source>
</evidence>
<evidence type="ECO:0000250" key="2">
    <source>
        <dbReference type="UniProtKB" id="B9W5G6"/>
    </source>
</evidence>
<evidence type="ECO:0000250" key="3">
    <source>
        <dbReference type="UniProtKB" id="P07845"/>
    </source>
</evidence>
<evidence type="ECO:0000250" key="4">
    <source>
        <dbReference type="UniProtKB" id="P61914"/>
    </source>
</evidence>
<evidence type="ECO:0000255" key="5"/>
<evidence type="ECO:0000269" key="6">
    <source>
    </source>
</evidence>
<evidence type="ECO:0000303" key="7">
    <source>
    </source>
</evidence>
<evidence type="ECO:0000303" key="8">
    <source>
    </source>
</evidence>
<evidence type="ECO:0000305" key="9"/>
<name>ACTL2_HYDVU</name>
<proteinExistence type="evidence at transcript level"/>
<protein>
    <recommendedName>
        <fullName evidence="8">Hydra actinoporin-like toxin 2</fullName>
        <shortName evidence="8">HALT-2</shortName>
    </recommendedName>
    <alternativeName>
        <fullName evidence="7">Alpha-pore-forming toxin</fullName>
        <shortName evidence="7">alpha-PFT</shortName>
    </alternativeName>
    <alternativeName>
        <fullName evidence="9">DELTA-hydritoxin-Hma1b</fullName>
        <shortName evidence="9">DELTA-HYTX-Hma1b</shortName>
    </alternativeName>
</protein>
<organism>
    <name type="scientific">Hydra vulgaris</name>
    <name type="common">Hydra</name>
    <name type="synonym">Hydra attenuata</name>
    <dbReference type="NCBI Taxonomy" id="6087"/>
    <lineage>
        <taxon>Eukaryota</taxon>
        <taxon>Metazoa</taxon>
        <taxon>Cnidaria</taxon>
        <taxon>Hydrozoa</taxon>
        <taxon>Hydroidolina</taxon>
        <taxon>Anthoathecata</taxon>
        <taxon>Aplanulata</taxon>
        <taxon>Hydridae</taxon>
        <taxon>Hydra</taxon>
    </lineage>
</organism>
<reference key="1">
    <citation type="journal article" date="2014" name="Toxicon">
        <title>Hydra actinoporin-like toxin-1, an unusual hemolysin from the nematocyst venom of Hydra magnipapillata which belongs to an extended gene family.</title>
        <authorList>
            <person name="Glasser E."/>
            <person name="Rachamim T."/>
            <person name="Aharonovich D."/>
            <person name="Sher D."/>
        </authorList>
    </citation>
    <scope>NUCLEOTIDE SEQUENCE [GENOMIC DNA]</scope>
</reference>
<reference key="2">
    <citation type="journal article" date="2019" name="Toxicon">
        <title>Expansion of Hydra actinoporin-like toxin (HALT) gene family: expression divergence and functional convergence evolved through gene duplication.</title>
        <authorList>
            <person name="Yap W.Y."/>
            <person name="Tan K.J.S.X."/>
            <person name="Hwang J.S."/>
        </authorList>
    </citation>
    <scope>NUCLEOTIDE SEQUENCE [MRNA]</scope>
    <scope>TISSUE SPECIFICITY</scope>
    <scope>RECOMBINANT EXPRESSION</scope>
</reference>
<keyword id="KW-0204">Cytolysis</keyword>
<keyword id="KW-0354">Hemolysis</keyword>
<keyword id="KW-0472">Membrane</keyword>
<keyword id="KW-0166">Nematocyst</keyword>
<keyword id="KW-1185">Reference proteome</keyword>
<keyword id="KW-0964">Secreted</keyword>
<keyword id="KW-0732">Signal</keyword>
<keyword id="KW-1052">Target cell membrane</keyword>
<keyword id="KW-1053">Target membrane</keyword>
<keyword id="KW-0800">Toxin</keyword>
<keyword id="KW-0812">Transmembrane</keyword>